<geneLocation type="chloroplast"/>
<dbReference type="EMBL" id="DQ119058">
    <property type="protein sequence ID" value="AAZ94698.1"/>
    <property type="molecule type" value="Genomic_DNA"/>
</dbReference>
<dbReference type="EMBL" id="AJ970307">
    <property type="protein sequence ID" value="CAJ00808.1"/>
    <property type="molecule type" value="Genomic_DNA"/>
</dbReference>
<dbReference type="EMBL" id="DQ865975">
    <property type="protein sequence ID" value="ABI97462.1"/>
    <property type="molecule type" value="Genomic_DNA"/>
</dbReference>
<dbReference type="EMBL" id="DQ865976">
    <property type="protein sequence ID" value="ABI98793.1"/>
    <property type="molecule type" value="Genomic_DNA"/>
</dbReference>
<dbReference type="RefSeq" id="YP_247649.1">
    <property type="nucleotide sequence ID" value="NC_007144.1"/>
</dbReference>
<dbReference type="SMR" id="Q2QD41"/>
<dbReference type="GeneID" id="3429362"/>
<dbReference type="KEGG" id="csv:3429362"/>
<dbReference type="OrthoDB" id="1640at2759"/>
<dbReference type="GO" id="GO:0009535">
    <property type="term" value="C:chloroplast thylakoid membrane"/>
    <property type="evidence" value="ECO:0007669"/>
    <property type="project" value="UniProtKB-SubCell"/>
</dbReference>
<dbReference type="GO" id="GO:0020037">
    <property type="term" value="F:heme binding"/>
    <property type="evidence" value="ECO:0007669"/>
    <property type="project" value="InterPro"/>
</dbReference>
<dbReference type="GO" id="GO:0017004">
    <property type="term" value="P:cytochrome complex assembly"/>
    <property type="evidence" value="ECO:0007669"/>
    <property type="project" value="UniProtKB-UniRule"/>
</dbReference>
<dbReference type="HAMAP" id="MF_01391">
    <property type="entry name" value="CytC_CcsA"/>
    <property type="match status" value="1"/>
</dbReference>
<dbReference type="InterPro" id="IPR002541">
    <property type="entry name" value="Cyt_c_assembly"/>
</dbReference>
<dbReference type="InterPro" id="IPR017562">
    <property type="entry name" value="Cyt_c_biogenesis_CcsA"/>
</dbReference>
<dbReference type="InterPro" id="IPR045062">
    <property type="entry name" value="Cyt_c_biogenesis_CcsA/CcmC"/>
</dbReference>
<dbReference type="NCBIfam" id="TIGR03144">
    <property type="entry name" value="cytochr_II_ccsB"/>
    <property type="match status" value="1"/>
</dbReference>
<dbReference type="PANTHER" id="PTHR30071:SF1">
    <property type="entry name" value="CYTOCHROME B_B6 PROTEIN-RELATED"/>
    <property type="match status" value="1"/>
</dbReference>
<dbReference type="PANTHER" id="PTHR30071">
    <property type="entry name" value="HEME EXPORTER PROTEIN C"/>
    <property type="match status" value="1"/>
</dbReference>
<dbReference type="Pfam" id="PF01578">
    <property type="entry name" value="Cytochrom_C_asm"/>
    <property type="match status" value="1"/>
</dbReference>
<evidence type="ECO:0000255" key="1">
    <source>
        <dbReference type="HAMAP-Rule" id="MF_01391"/>
    </source>
</evidence>
<reference key="1">
    <citation type="journal article" date="2006" name="Plant Cell Rep.">
        <title>Complete sequence and organization of the cucumber (Cucumis sativus L. cv. Baekmibaekdadagi) chloroplast genome.</title>
        <authorList>
            <person name="Kim J.-S."/>
            <person name="Jung J.D."/>
            <person name="Lee J.-A."/>
            <person name="Park H.-W."/>
            <person name="Oh K.-H."/>
            <person name="Jeong W.J."/>
            <person name="Choi D.-W."/>
            <person name="Liu J.R."/>
            <person name="Cho K.Y."/>
        </authorList>
    </citation>
    <scope>NUCLEOTIDE SEQUENCE [LARGE SCALE GENOMIC DNA]</scope>
    <source>
        <strain>cv. Baekmibaekdadagi</strain>
    </source>
</reference>
<reference key="2">
    <citation type="journal article" date="2007" name="Cell. Mol. Biol. Lett.">
        <title>The complete structure of the cucumber (Cucumis sativus L.) chloroplast genome: its composition and comparative analysis.</title>
        <authorList>
            <person name="Plader W.W."/>
            <person name="Yukawa Y."/>
            <person name="Sugiura M."/>
            <person name="Malepszy S."/>
        </authorList>
    </citation>
    <scope>NUCLEOTIDE SEQUENCE [LARGE SCALE GENOMIC DNA]</scope>
    <source>
        <strain>cv. Borszczagowski</strain>
    </source>
</reference>
<reference key="3">
    <citation type="journal article" date="2007" name="Genome">
        <title>Sequencing cucumber (Cucumis sativus L.) chloroplast genomes identifies differences between chilling-tolerant and -susceptible cucumber lines.</title>
        <authorList>
            <person name="Chung S.-M."/>
            <person name="Gordon V.S."/>
            <person name="Staub J.E."/>
        </authorList>
    </citation>
    <scope>NUCLEOTIDE SEQUENCE [LARGE SCALE GENOMIC DNA]</scope>
    <source>
        <strain>cv. Chipper</strain>
        <strain>cv. Gy14</strain>
    </source>
</reference>
<gene>
    <name evidence="1" type="primary">ccsA</name>
</gene>
<sequence>MIFSTFEHILTHISFSVISIVITIQLITLLINETVGLYVSSEKGMIATFFCITGLLVTRWIYLRHLPLSDLYESLLFLSWAFSIIHLFTYFKKYKNHLSVSAITAPSTIFTQGFATSGFLTEMHQSPLLVPALQSHWLMMHVSMMVLGYAALLCGSLFSVALIVITFQKAIRIFCKNNNLLNALFSFNEIQYINEGNYFVRNTSFFSSKNYYKSQLIQQLDHWSYRIISLGFIFLSIGILSGAVWANETWGSYWNWDPKETWAFITWTIFAIYLHTRTNKNFEGVNSAIVASMGFLIIWICYFGVNLLGIGLHSYGSFTLTSN</sequence>
<proteinExistence type="inferred from homology"/>
<comment type="function">
    <text evidence="1">Required during biogenesis of c-type cytochromes (cytochrome c6 and cytochrome f) at the step of heme attachment.</text>
</comment>
<comment type="subunit">
    <text evidence="1">May interact with Ccs1.</text>
</comment>
<comment type="subcellular location">
    <subcellularLocation>
        <location evidence="1">Plastid</location>
        <location evidence="1">Chloroplast thylakoid membrane</location>
        <topology evidence="1">Multi-pass membrane protein</topology>
    </subcellularLocation>
</comment>
<comment type="similarity">
    <text evidence="1">Belongs to the CcmF/CycK/Ccl1/NrfE/CcsA family.</text>
</comment>
<organism>
    <name type="scientific">Cucumis sativus</name>
    <name type="common">Cucumber</name>
    <dbReference type="NCBI Taxonomy" id="3659"/>
    <lineage>
        <taxon>Eukaryota</taxon>
        <taxon>Viridiplantae</taxon>
        <taxon>Streptophyta</taxon>
        <taxon>Embryophyta</taxon>
        <taxon>Tracheophyta</taxon>
        <taxon>Spermatophyta</taxon>
        <taxon>Magnoliopsida</taxon>
        <taxon>eudicotyledons</taxon>
        <taxon>Gunneridae</taxon>
        <taxon>Pentapetalae</taxon>
        <taxon>rosids</taxon>
        <taxon>fabids</taxon>
        <taxon>Cucurbitales</taxon>
        <taxon>Cucurbitaceae</taxon>
        <taxon>Benincaseae</taxon>
        <taxon>Cucumis</taxon>
    </lineage>
</organism>
<keyword id="KW-0150">Chloroplast</keyword>
<keyword id="KW-0201">Cytochrome c-type biogenesis</keyword>
<keyword id="KW-0472">Membrane</keyword>
<keyword id="KW-0934">Plastid</keyword>
<keyword id="KW-0793">Thylakoid</keyword>
<keyword id="KW-0812">Transmembrane</keyword>
<keyword id="KW-1133">Transmembrane helix</keyword>
<feature type="chain" id="PRO_0000353744" description="Cytochrome c biogenesis protein CcsA">
    <location>
        <begin position="1"/>
        <end position="323"/>
    </location>
</feature>
<feature type="transmembrane region" description="Helical" evidence="1">
    <location>
        <begin position="9"/>
        <end position="29"/>
    </location>
</feature>
<feature type="transmembrane region" description="Helical" evidence="1">
    <location>
        <begin position="37"/>
        <end position="57"/>
    </location>
</feature>
<feature type="transmembrane region" description="Helical" evidence="1">
    <location>
        <begin position="71"/>
        <end position="91"/>
    </location>
</feature>
<feature type="transmembrane region" description="Helical" evidence="1">
    <location>
        <begin position="100"/>
        <end position="120"/>
    </location>
</feature>
<feature type="transmembrane region" description="Helical" evidence="1">
    <location>
        <begin position="145"/>
        <end position="165"/>
    </location>
</feature>
<feature type="transmembrane region" description="Helical" evidence="1">
    <location>
        <begin position="227"/>
        <end position="247"/>
    </location>
</feature>
<feature type="transmembrane region" description="Helical" evidence="1">
    <location>
        <begin position="261"/>
        <end position="275"/>
    </location>
</feature>
<feature type="transmembrane region" description="Helical" evidence="1">
    <location>
        <begin position="288"/>
        <end position="308"/>
    </location>
</feature>
<feature type="sequence variant" description="In cv. Borszczagowski.">
    <original>KYKNHLSVSAITAP</original>
    <variation>NIKTIKCKRNNRA</variation>
    <location>
        <begin position="93"/>
        <end position="106"/>
    </location>
</feature>
<feature type="sequence variant" description="In cv. Borszczagowski.">
    <original>Q</original>
    <variation>P</variation>
    <location>
        <position position="125"/>
    </location>
</feature>
<feature type="sequence variant" description="In cv. Borszczagowski.">
    <original>Y</original>
    <variation>S</variation>
    <location>
        <position position="192"/>
    </location>
</feature>
<feature type="sequence variant" description="In cv. Borszczagowski.">
    <original>Y</original>
    <variation>C</variation>
    <location>
        <position position="225"/>
    </location>
</feature>
<feature type="sequence variant" description="In cv. Borszczagowski.">
    <original>S</original>
    <variation>P</variation>
    <location>
        <position position="317"/>
    </location>
</feature>
<protein>
    <recommendedName>
        <fullName evidence="1">Cytochrome c biogenesis protein CcsA</fullName>
    </recommendedName>
</protein>
<name>CCSA_CUCSA</name>
<accession>Q2QD41</accession>
<accession>Q4VZL9</accession>